<dbReference type="EC" id="4.2.1.90" evidence="1"/>
<dbReference type="EMBL" id="CP000964">
    <property type="protein sequence ID" value="ACI08465.1"/>
    <property type="molecule type" value="Genomic_DNA"/>
</dbReference>
<dbReference type="SMR" id="B5XNY1"/>
<dbReference type="KEGG" id="kpe:KPK_1498"/>
<dbReference type="HOGENOM" id="CLU_030273_1_0_6"/>
<dbReference type="Proteomes" id="UP000001734">
    <property type="component" value="Chromosome"/>
</dbReference>
<dbReference type="GO" id="GO:0050032">
    <property type="term" value="F:L-rhamnonate dehydratase activity"/>
    <property type="evidence" value="ECO:0007669"/>
    <property type="project" value="UniProtKB-UniRule"/>
</dbReference>
<dbReference type="GO" id="GO:0000287">
    <property type="term" value="F:magnesium ion binding"/>
    <property type="evidence" value="ECO:0007669"/>
    <property type="project" value="UniProtKB-UniRule"/>
</dbReference>
<dbReference type="GO" id="GO:0009063">
    <property type="term" value="P:amino acid catabolic process"/>
    <property type="evidence" value="ECO:0007669"/>
    <property type="project" value="InterPro"/>
</dbReference>
<dbReference type="GO" id="GO:0016052">
    <property type="term" value="P:carbohydrate catabolic process"/>
    <property type="evidence" value="ECO:0007669"/>
    <property type="project" value="TreeGrafter"/>
</dbReference>
<dbReference type="CDD" id="cd03327">
    <property type="entry name" value="MR_like_2"/>
    <property type="match status" value="1"/>
</dbReference>
<dbReference type="FunFam" id="3.20.20.120:FF:000005">
    <property type="entry name" value="Putative L-rhamnonate dehydratase"/>
    <property type="match status" value="1"/>
</dbReference>
<dbReference type="Gene3D" id="3.20.20.120">
    <property type="entry name" value="Enolase-like C-terminal domain"/>
    <property type="match status" value="1"/>
</dbReference>
<dbReference type="Gene3D" id="3.30.390.10">
    <property type="entry name" value="Enolase-like, N-terminal domain"/>
    <property type="match status" value="1"/>
</dbReference>
<dbReference type="HAMAP" id="MF_01288">
    <property type="entry name" value="Rhamnon_dehydrat"/>
    <property type="match status" value="1"/>
</dbReference>
<dbReference type="InterPro" id="IPR036849">
    <property type="entry name" value="Enolase-like_C_sf"/>
</dbReference>
<dbReference type="InterPro" id="IPR029017">
    <property type="entry name" value="Enolase-like_N"/>
</dbReference>
<dbReference type="InterPro" id="IPR029065">
    <property type="entry name" value="Enolase_C-like"/>
</dbReference>
<dbReference type="InterPro" id="IPR023444">
    <property type="entry name" value="L-Rhamnon_dehydrat"/>
</dbReference>
<dbReference type="InterPro" id="IPR018110">
    <property type="entry name" value="Mandel_Rmase/mucon_lact_enz_CS"/>
</dbReference>
<dbReference type="InterPro" id="IPR013342">
    <property type="entry name" value="Mandelate_racemase_C"/>
</dbReference>
<dbReference type="InterPro" id="IPR013341">
    <property type="entry name" value="Mandelate_racemase_N_dom"/>
</dbReference>
<dbReference type="InterPro" id="IPR046945">
    <property type="entry name" value="RHMD-like"/>
</dbReference>
<dbReference type="NCBIfam" id="NF011968">
    <property type="entry name" value="PRK15440.1"/>
    <property type="match status" value="1"/>
</dbReference>
<dbReference type="PANTHER" id="PTHR13794">
    <property type="entry name" value="ENOLASE SUPERFAMILY, MANDELATE RACEMASE"/>
    <property type="match status" value="1"/>
</dbReference>
<dbReference type="PANTHER" id="PTHR13794:SF58">
    <property type="entry name" value="MITOCHONDRIAL ENOLASE SUPERFAMILY MEMBER 1"/>
    <property type="match status" value="1"/>
</dbReference>
<dbReference type="Pfam" id="PF13378">
    <property type="entry name" value="MR_MLE_C"/>
    <property type="match status" value="1"/>
</dbReference>
<dbReference type="Pfam" id="PF02746">
    <property type="entry name" value="MR_MLE_N"/>
    <property type="match status" value="1"/>
</dbReference>
<dbReference type="SFLD" id="SFLDS00001">
    <property type="entry name" value="Enolase"/>
    <property type="match status" value="1"/>
</dbReference>
<dbReference type="SFLD" id="SFLDF00006">
    <property type="entry name" value="rhamnonate_dehydratase"/>
    <property type="match status" value="1"/>
</dbReference>
<dbReference type="SMART" id="SM00922">
    <property type="entry name" value="MR_MLE"/>
    <property type="match status" value="1"/>
</dbReference>
<dbReference type="SUPFAM" id="SSF51604">
    <property type="entry name" value="Enolase C-terminal domain-like"/>
    <property type="match status" value="1"/>
</dbReference>
<dbReference type="SUPFAM" id="SSF54826">
    <property type="entry name" value="Enolase N-terminal domain-like"/>
    <property type="match status" value="1"/>
</dbReference>
<dbReference type="PROSITE" id="PS00908">
    <property type="entry name" value="MR_MLE_1"/>
    <property type="match status" value="1"/>
</dbReference>
<organism>
    <name type="scientific">Klebsiella pneumoniae (strain 342)</name>
    <dbReference type="NCBI Taxonomy" id="507522"/>
    <lineage>
        <taxon>Bacteria</taxon>
        <taxon>Pseudomonadati</taxon>
        <taxon>Pseudomonadota</taxon>
        <taxon>Gammaproteobacteria</taxon>
        <taxon>Enterobacterales</taxon>
        <taxon>Enterobacteriaceae</taxon>
        <taxon>Klebsiella/Raoultella group</taxon>
        <taxon>Klebsiella</taxon>
        <taxon>Klebsiella pneumoniae complex</taxon>
    </lineage>
</organism>
<gene>
    <name evidence="1" type="primary">rhmD</name>
    <name type="ordered locus">KPK_1498</name>
</gene>
<name>RHMD_KLEP3</name>
<proteinExistence type="inferred from homology"/>
<feature type="chain" id="PRO_1000140374" description="L-rhamnonate dehydratase">
    <location>
        <begin position="1"/>
        <end position="401"/>
    </location>
</feature>
<feature type="active site" description="Proton acceptor" evidence="1">
    <location>
        <position position="325"/>
    </location>
</feature>
<feature type="binding site" evidence="1">
    <location>
        <position position="29"/>
    </location>
    <ligand>
        <name>substrate</name>
    </ligand>
</feature>
<feature type="binding site" evidence="1">
    <location>
        <position position="55"/>
    </location>
    <ligand>
        <name>substrate</name>
    </ligand>
</feature>
<feature type="binding site" evidence="1">
    <location>
        <position position="222"/>
    </location>
    <ligand>
        <name>Mg(2+)</name>
        <dbReference type="ChEBI" id="CHEBI:18420"/>
    </ligand>
</feature>
<feature type="binding site" evidence="1">
    <location>
        <position position="248"/>
    </location>
    <ligand>
        <name>Mg(2+)</name>
        <dbReference type="ChEBI" id="CHEBI:18420"/>
    </ligand>
</feature>
<feature type="binding site" evidence="1">
    <location>
        <position position="276"/>
    </location>
    <ligand>
        <name>Mg(2+)</name>
        <dbReference type="ChEBI" id="CHEBI:18420"/>
    </ligand>
</feature>
<feature type="binding site" evidence="1">
    <location>
        <position position="345"/>
    </location>
    <ligand>
        <name>substrate</name>
    </ligand>
</feature>
<feature type="site" description="Increases basicity of active site His" evidence="1">
    <location>
        <position position="298"/>
    </location>
</feature>
<feature type="site" description="Transition state stabilizer" evidence="1">
    <location>
        <position position="345"/>
    </location>
</feature>
<sequence>MTLPKIKHVRAWFTGGATAEQGAGGGDYHDQGANHWIDDHIATPMSKYKEYEQSRQSFGINVLGTLIVEVEADNGQTGFAVSTAGEMGCFIVEKHLNRFIEGKCVSDIKLIHDQMLNATLYYAGSGGLVMNTLSCVDLALWDLFGKVVGLPVYKLLGGAVRDEIQFYATGARPDLAQEMGFIGGKMPTHWGPHDGDAGIRKDVAMVADMREKCGPDFWLMLDCWMSQDVNYATKLAHACAPYNLKWIEECLPPQQYEGYRELKRQAPAGMMVTSGEHHGTLQSFRTLSETGIDIMQPDVGWCGGLTTLVEIAAIAKARGQLVVPHGSSVYSHHAVITFTNTPFSEFLMTSPDCATLRPQFDPILLGEPVPERGRIHKSVLDKPGFGVELNRDCNLKRPYQH</sequence>
<evidence type="ECO:0000255" key="1">
    <source>
        <dbReference type="HAMAP-Rule" id="MF_01288"/>
    </source>
</evidence>
<accession>B5XNY1</accession>
<protein>
    <recommendedName>
        <fullName evidence="1">L-rhamnonate dehydratase</fullName>
        <shortName evidence="1">RhamD</shortName>
        <ecNumber evidence="1">4.2.1.90</ecNumber>
    </recommendedName>
</protein>
<reference key="1">
    <citation type="journal article" date="2008" name="PLoS Genet.">
        <title>Complete genome sequence of the N2-fixing broad host range endophyte Klebsiella pneumoniae 342 and virulence predictions verified in mice.</title>
        <authorList>
            <person name="Fouts D.E."/>
            <person name="Tyler H.L."/>
            <person name="DeBoy R.T."/>
            <person name="Daugherty S."/>
            <person name="Ren Q."/>
            <person name="Badger J.H."/>
            <person name="Durkin A.S."/>
            <person name="Huot H."/>
            <person name="Shrivastava S."/>
            <person name="Kothari S."/>
            <person name="Dodson R.J."/>
            <person name="Mohamoud Y."/>
            <person name="Khouri H."/>
            <person name="Roesch L.F.W."/>
            <person name="Krogfelt K.A."/>
            <person name="Struve C."/>
            <person name="Triplett E.W."/>
            <person name="Methe B.A."/>
        </authorList>
    </citation>
    <scope>NUCLEOTIDE SEQUENCE [LARGE SCALE GENOMIC DNA]</scope>
    <source>
        <strain>342</strain>
    </source>
</reference>
<keyword id="KW-0456">Lyase</keyword>
<keyword id="KW-0460">Magnesium</keyword>
<keyword id="KW-0479">Metal-binding</keyword>
<comment type="function">
    <text evidence="1">Catalyzes the dehydration of L-rhamnonate to 2-keto-3-deoxy-L-rhamnonate (KDR).</text>
</comment>
<comment type="catalytic activity">
    <reaction evidence="1">
        <text>L-rhamnonate = 2-dehydro-3-deoxy-L-rhamnonate + H2O</text>
        <dbReference type="Rhea" id="RHEA:23080"/>
        <dbReference type="ChEBI" id="CHEBI:15377"/>
        <dbReference type="ChEBI" id="CHEBI:58118"/>
        <dbReference type="ChEBI" id="CHEBI:58371"/>
        <dbReference type="EC" id="4.2.1.90"/>
    </reaction>
</comment>
<comment type="cofactor">
    <cofactor evidence="1">
        <name>Mg(2+)</name>
        <dbReference type="ChEBI" id="CHEBI:18420"/>
    </cofactor>
    <text evidence="1">Binds 1 Mg(2+) ion per subunit.</text>
</comment>
<comment type="subunit">
    <text evidence="1">Homooctamer; tetramer of dimers.</text>
</comment>
<comment type="miscellaneous">
    <text evidence="1">Reaction proceeds via a syn dehydration.</text>
</comment>
<comment type="similarity">
    <text evidence="1">Belongs to the mandelate racemase/muconate lactonizing enzyme family. RhamD subfamily.</text>
</comment>